<evidence type="ECO:0000250" key="1"/>
<evidence type="ECO:0000305" key="2"/>
<gene>
    <name type="primary">bioF</name>
    <name type="ordered locus">Dole_0680</name>
</gene>
<keyword id="KW-0093">Biotin biosynthesis</keyword>
<keyword id="KW-0663">Pyridoxal phosphate</keyword>
<keyword id="KW-1185">Reference proteome</keyword>
<keyword id="KW-0808">Transferase</keyword>
<sequence length="385" mass="41170">MSKLDFVEAELEKRRAASRLRTLRPVAPADGAAVTINGARLLNVCSNDYLGLSCHPLLVERAQAFAAQWGAGATASRLVCGNYTCFDRVEEKLARLKQTPAALVLNSGYQANTTLLPALCDRDSLILSDRLNHNSIIMGCRLARCAVTLFDHNDPAHLEKLLVETANRGFSRRLIVTESVFSMDGDCCDMDALAGLAQAHDALLMVDEAHATGVFGEQGMGLTCGKPVDVVMGTFGKGCGSFGAYVACSSALRDFFVNRCAGFIYSTGLPPAVLGSIDAALDLVPAMDAERQTLLDNAAHLRVRLATFGFDTGASSSQILPVIVGSEQAALDLSRFLEGRGFLAVAIRPPSVPEAQSRIRVSLSALHTRADVDRLADAFGAWRRP</sequence>
<protein>
    <recommendedName>
        <fullName>Putative 8-amino-7-oxononanoate synthase</fullName>
        <shortName>AONS</shortName>
        <ecNumber>2.3.1.47</ecNumber>
    </recommendedName>
    <alternativeName>
        <fullName>7-keto-8-amino-pelargonic acid synthase</fullName>
        <shortName>7-KAP synthase</shortName>
    </alternativeName>
    <alternativeName>
        <fullName>8-amino-7-ketopelargonate synthase</fullName>
    </alternativeName>
</protein>
<reference key="1">
    <citation type="submission" date="2007-10" db="EMBL/GenBank/DDBJ databases">
        <title>Complete sequence of Desulfococcus oleovorans Hxd3.</title>
        <authorList>
            <consortium name="US DOE Joint Genome Institute"/>
            <person name="Copeland A."/>
            <person name="Lucas S."/>
            <person name="Lapidus A."/>
            <person name="Barry K."/>
            <person name="Glavina del Rio T."/>
            <person name="Dalin E."/>
            <person name="Tice H."/>
            <person name="Pitluck S."/>
            <person name="Kiss H."/>
            <person name="Brettin T."/>
            <person name="Bruce D."/>
            <person name="Detter J.C."/>
            <person name="Han C."/>
            <person name="Schmutz J."/>
            <person name="Larimer F."/>
            <person name="Land M."/>
            <person name="Hauser L."/>
            <person name="Kyrpides N."/>
            <person name="Kim E."/>
            <person name="Wawrik B."/>
            <person name="Richardson P."/>
        </authorList>
    </citation>
    <scope>NUCLEOTIDE SEQUENCE [LARGE SCALE GENOMIC DNA]</scope>
    <source>
        <strain>DSM 6200 / JCM 39069 / Hxd3</strain>
    </source>
</reference>
<accession>A8ZUS7</accession>
<feature type="chain" id="PRO_0000380966" description="Putative 8-amino-7-oxononanoate synthase">
    <location>
        <begin position="1"/>
        <end position="385"/>
    </location>
</feature>
<feature type="binding site" evidence="1">
    <location>
        <position position="21"/>
    </location>
    <ligand>
        <name>substrate</name>
    </ligand>
</feature>
<feature type="binding site" evidence="1">
    <location>
        <begin position="108"/>
        <end position="109"/>
    </location>
    <ligand>
        <name>pyridoxal 5'-phosphate</name>
        <dbReference type="ChEBI" id="CHEBI:597326"/>
    </ligand>
</feature>
<feature type="binding site" evidence="1">
    <location>
        <position position="133"/>
    </location>
    <ligand>
        <name>substrate</name>
    </ligand>
</feature>
<feature type="binding site" evidence="1">
    <location>
        <position position="182"/>
    </location>
    <ligand>
        <name>pyridoxal 5'-phosphate</name>
        <dbReference type="ChEBI" id="CHEBI:597326"/>
    </ligand>
</feature>
<feature type="binding site" evidence="1">
    <location>
        <begin position="207"/>
        <end position="210"/>
    </location>
    <ligand>
        <name>pyridoxal 5'-phosphate</name>
        <dbReference type="ChEBI" id="CHEBI:597326"/>
    </ligand>
</feature>
<feature type="binding site" evidence="1">
    <location>
        <begin position="234"/>
        <end position="237"/>
    </location>
    <ligand>
        <name>pyridoxal 5'-phosphate</name>
        <dbReference type="ChEBI" id="CHEBI:597326"/>
    </ligand>
</feature>
<feature type="binding site" evidence="1">
    <location>
        <position position="351"/>
    </location>
    <ligand>
        <name>substrate</name>
    </ligand>
</feature>
<feature type="modified residue" description="N6-(pyridoxal phosphate)lysine" evidence="1">
    <location>
        <position position="237"/>
    </location>
</feature>
<dbReference type="EC" id="2.3.1.47"/>
<dbReference type="EMBL" id="CP000859">
    <property type="protein sequence ID" value="ABW66490.1"/>
    <property type="molecule type" value="Genomic_DNA"/>
</dbReference>
<dbReference type="RefSeq" id="WP_012174109.1">
    <property type="nucleotide sequence ID" value="NC_009943.1"/>
</dbReference>
<dbReference type="SMR" id="A8ZUS7"/>
<dbReference type="STRING" id="96561.Dole_0680"/>
<dbReference type="KEGG" id="dol:Dole_0680"/>
<dbReference type="eggNOG" id="COG0156">
    <property type="taxonomic scope" value="Bacteria"/>
</dbReference>
<dbReference type="HOGENOM" id="CLU_015846_11_2_7"/>
<dbReference type="OrthoDB" id="9807157at2"/>
<dbReference type="UniPathway" id="UPA00078"/>
<dbReference type="Proteomes" id="UP000008561">
    <property type="component" value="Chromosome"/>
</dbReference>
<dbReference type="GO" id="GO:0008710">
    <property type="term" value="F:8-amino-7-oxononanoate synthase activity"/>
    <property type="evidence" value="ECO:0007669"/>
    <property type="project" value="UniProtKB-EC"/>
</dbReference>
<dbReference type="GO" id="GO:0030170">
    <property type="term" value="F:pyridoxal phosphate binding"/>
    <property type="evidence" value="ECO:0007669"/>
    <property type="project" value="InterPro"/>
</dbReference>
<dbReference type="GO" id="GO:0009102">
    <property type="term" value="P:biotin biosynthetic process"/>
    <property type="evidence" value="ECO:0007669"/>
    <property type="project" value="UniProtKB-UniPathway"/>
</dbReference>
<dbReference type="CDD" id="cd06454">
    <property type="entry name" value="KBL_like"/>
    <property type="match status" value="1"/>
</dbReference>
<dbReference type="Gene3D" id="3.90.1150.10">
    <property type="entry name" value="Aspartate Aminotransferase, domain 1"/>
    <property type="match status" value="1"/>
</dbReference>
<dbReference type="Gene3D" id="3.40.640.10">
    <property type="entry name" value="Type I PLP-dependent aspartate aminotransferase-like (Major domain)"/>
    <property type="match status" value="1"/>
</dbReference>
<dbReference type="InterPro" id="IPR004839">
    <property type="entry name" value="Aminotransferase_I/II_large"/>
</dbReference>
<dbReference type="InterPro" id="IPR050087">
    <property type="entry name" value="AON_synthase_class-II"/>
</dbReference>
<dbReference type="InterPro" id="IPR004723">
    <property type="entry name" value="AONS_Archaea/Proteobacteria"/>
</dbReference>
<dbReference type="InterPro" id="IPR015424">
    <property type="entry name" value="PyrdxlP-dep_Trfase"/>
</dbReference>
<dbReference type="InterPro" id="IPR015421">
    <property type="entry name" value="PyrdxlP-dep_Trfase_major"/>
</dbReference>
<dbReference type="InterPro" id="IPR015422">
    <property type="entry name" value="PyrdxlP-dep_Trfase_small"/>
</dbReference>
<dbReference type="NCBIfam" id="TIGR00858">
    <property type="entry name" value="bioF"/>
    <property type="match status" value="1"/>
</dbReference>
<dbReference type="PANTHER" id="PTHR13693:SF100">
    <property type="entry name" value="8-AMINO-7-OXONONANOATE SYNTHASE"/>
    <property type="match status" value="1"/>
</dbReference>
<dbReference type="PANTHER" id="PTHR13693">
    <property type="entry name" value="CLASS II AMINOTRANSFERASE/8-AMINO-7-OXONONANOATE SYNTHASE"/>
    <property type="match status" value="1"/>
</dbReference>
<dbReference type="Pfam" id="PF00155">
    <property type="entry name" value="Aminotran_1_2"/>
    <property type="match status" value="1"/>
</dbReference>
<dbReference type="SUPFAM" id="SSF53383">
    <property type="entry name" value="PLP-dependent transferases"/>
    <property type="match status" value="1"/>
</dbReference>
<name>BIOF_DESOH</name>
<organism>
    <name type="scientific">Desulfosudis oleivorans (strain DSM 6200 / JCM 39069 / Hxd3)</name>
    <name type="common">Desulfococcus oleovorans</name>
    <dbReference type="NCBI Taxonomy" id="96561"/>
    <lineage>
        <taxon>Bacteria</taxon>
        <taxon>Pseudomonadati</taxon>
        <taxon>Thermodesulfobacteriota</taxon>
        <taxon>Desulfobacteria</taxon>
        <taxon>Desulfobacterales</taxon>
        <taxon>Desulfosudaceae</taxon>
        <taxon>Desulfosudis</taxon>
    </lineage>
</organism>
<proteinExistence type="inferred from homology"/>
<comment type="function">
    <text evidence="1">Catalyzes the decarboxylative condensation of pimeloyl-[acyl-carrier protein] and L-alanine to produce 8-amino-7-oxononanoate (AON), [acyl-carrier protein], and carbon dioxide.</text>
</comment>
<comment type="catalytic activity">
    <reaction>
        <text>6-carboxyhexanoyl-[ACP] + L-alanine + H(+) = (8S)-8-amino-7-oxononanoate + holo-[ACP] + CO2</text>
        <dbReference type="Rhea" id="RHEA:42288"/>
        <dbReference type="Rhea" id="RHEA-COMP:9685"/>
        <dbReference type="Rhea" id="RHEA-COMP:9955"/>
        <dbReference type="ChEBI" id="CHEBI:15378"/>
        <dbReference type="ChEBI" id="CHEBI:16526"/>
        <dbReference type="ChEBI" id="CHEBI:57972"/>
        <dbReference type="ChEBI" id="CHEBI:64479"/>
        <dbReference type="ChEBI" id="CHEBI:78846"/>
        <dbReference type="ChEBI" id="CHEBI:149468"/>
        <dbReference type="EC" id="2.3.1.47"/>
    </reaction>
</comment>
<comment type="cofactor">
    <cofactor evidence="1">
        <name>pyridoxal 5'-phosphate</name>
        <dbReference type="ChEBI" id="CHEBI:597326"/>
    </cofactor>
</comment>
<comment type="pathway">
    <text>Cofactor biosynthesis; biotin biosynthesis.</text>
</comment>
<comment type="subunit">
    <text evidence="1">Homodimer.</text>
</comment>
<comment type="similarity">
    <text evidence="2">Belongs to the class-II pyridoxal-phosphate-dependent aminotransferase family. BioF subfamily.</text>
</comment>